<accession>B4EYT8</accession>
<gene>
    <name evidence="1" type="primary">hemE</name>
    <name type="ordered locus">PMI2774</name>
</gene>
<protein>
    <recommendedName>
        <fullName evidence="1">Uroporphyrinogen decarboxylase</fullName>
        <shortName evidence="1">UPD</shortName>
        <shortName evidence="1">URO-D</shortName>
        <ecNumber evidence="1">4.1.1.37</ecNumber>
    </recommendedName>
</protein>
<name>DCUP_PROMH</name>
<proteinExistence type="inferred from homology"/>
<sequence>MSELKNDRYLRALLRQPVDVTPVWMMRQAGRYLPEYKETRAQAGDFISLCKNTELACEVTLQPLRRFPLDAAILFSDILTIPDAMGLGLYFETGEGPRFKTPINSLDDIKKLPIPDPEDELGYVMNAVRAIRHALQGNVPLIGFSGSPWTLATYMIEGGSSKAFTKIKKMMYSEPQALHLLLDKLADSVILYLNAQIKAGAQSIMIFDTWGGVLTGRDYQLFSLQYMHKIVDGLIRENEGRKVPVTLFTKGGGRWLEAMAATGCDALGLDWTIDIEDARRRVGDKVALQGNMDPSMLYAPPARIEQEVATILAGFGKGTGHVFNLGHGIHQDVPPAHAGAFIDAVHRLSKPYHQDND</sequence>
<reference key="1">
    <citation type="journal article" date="2008" name="J. Bacteriol.">
        <title>Complete genome sequence of uropathogenic Proteus mirabilis, a master of both adherence and motility.</title>
        <authorList>
            <person name="Pearson M.M."/>
            <person name="Sebaihia M."/>
            <person name="Churcher C."/>
            <person name="Quail M.A."/>
            <person name="Seshasayee A.S."/>
            <person name="Luscombe N.M."/>
            <person name="Abdellah Z."/>
            <person name="Arrosmith C."/>
            <person name="Atkin B."/>
            <person name="Chillingworth T."/>
            <person name="Hauser H."/>
            <person name="Jagels K."/>
            <person name="Moule S."/>
            <person name="Mungall K."/>
            <person name="Norbertczak H."/>
            <person name="Rabbinowitsch E."/>
            <person name="Walker D."/>
            <person name="Whithead S."/>
            <person name="Thomson N.R."/>
            <person name="Rather P.N."/>
            <person name="Parkhill J."/>
            <person name="Mobley H.L.T."/>
        </authorList>
    </citation>
    <scope>NUCLEOTIDE SEQUENCE [LARGE SCALE GENOMIC DNA]</scope>
    <source>
        <strain>HI4320</strain>
    </source>
</reference>
<evidence type="ECO:0000255" key="1">
    <source>
        <dbReference type="HAMAP-Rule" id="MF_00218"/>
    </source>
</evidence>
<feature type="chain" id="PRO_1000100008" description="Uroporphyrinogen decarboxylase">
    <location>
        <begin position="1"/>
        <end position="357"/>
    </location>
</feature>
<feature type="binding site" evidence="1">
    <location>
        <begin position="27"/>
        <end position="31"/>
    </location>
    <ligand>
        <name>substrate</name>
    </ligand>
</feature>
<feature type="binding site" evidence="1">
    <location>
        <position position="77"/>
    </location>
    <ligand>
        <name>substrate</name>
    </ligand>
</feature>
<feature type="binding site" evidence="1">
    <location>
        <position position="154"/>
    </location>
    <ligand>
        <name>substrate</name>
    </ligand>
</feature>
<feature type="binding site" evidence="1">
    <location>
        <position position="209"/>
    </location>
    <ligand>
        <name>substrate</name>
    </ligand>
</feature>
<feature type="binding site" evidence="1">
    <location>
        <position position="327"/>
    </location>
    <ligand>
        <name>substrate</name>
    </ligand>
</feature>
<feature type="site" description="Transition state stabilizer" evidence="1">
    <location>
        <position position="77"/>
    </location>
</feature>
<organism>
    <name type="scientific">Proteus mirabilis (strain HI4320)</name>
    <dbReference type="NCBI Taxonomy" id="529507"/>
    <lineage>
        <taxon>Bacteria</taxon>
        <taxon>Pseudomonadati</taxon>
        <taxon>Pseudomonadota</taxon>
        <taxon>Gammaproteobacteria</taxon>
        <taxon>Enterobacterales</taxon>
        <taxon>Morganellaceae</taxon>
        <taxon>Proteus</taxon>
    </lineage>
</organism>
<comment type="function">
    <text evidence="1">Catalyzes the decarboxylation of four acetate groups of uroporphyrinogen-III to yield coproporphyrinogen-III.</text>
</comment>
<comment type="catalytic activity">
    <reaction evidence="1">
        <text>uroporphyrinogen III + 4 H(+) = coproporphyrinogen III + 4 CO2</text>
        <dbReference type="Rhea" id="RHEA:19865"/>
        <dbReference type="ChEBI" id="CHEBI:15378"/>
        <dbReference type="ChEBI" id="CHEBI:16526"/>
        <dbReference type="ChEBI" id="CHEBI:57308"/>
        <dbReference type="ChEBI" id="CHEBI:57309"/>
        <dbReference type="EC" id="4.1.1.37"/>
    </reaction>
</comment>
<comment type="pathway">
    <text evidence="1">Porphyrin-containing compound metabolism; protoporphyrin-IX biosynthesis; coproporphyrinogen-III from 5-aminolevulinate: step 4/4.</text>
</comment>
<comment type="subunit">
    <text evidence="1">Homodimer.</text>
</comment>
<comment type="subcellular location">
    <subcellularLocation>
        <location evidence="1">Cytoplasm</location>
    </subcellularLocation>
</comment>
<comment type="similarity">
    <text evidence="1">Belongs to the uroporphyrinogen decarboxylase family.</text>
</comment>
<dbReference type="EC" id="4.1.1.37" evidence="1"/>
<dbReference type="EMBL" id="AM942759">
    <property type="protein sequence ID" value="CAR45475.1"/>
    <property type="molecule type" value="Genomic_DNA"/>
</dbReference>
<dbReference type="RefSeq" id="WP_004249140.1">
    <property type="nucleotide sequence ID" value="NC_010554.1"/>
</dbReference>
<dbReference type="SMR" id="B4EYT8"/>
<dbReference type="EnsemblBacteria" id="CAR45475">
    <property type="protein sequence ID" value="CAR45475"/>
    <property type="gene ID" value="PMI2774"/>
</dbReference>
<dbReference type="GeneID" id="6801798"/>
<dbReference type="KEGG" id="pmr:PMI2774"/>
<dbReference type="eggNOG" id="COG0407">
    <property type="taxonomic scope" value="Bacteria"/>
</dbReference>
<dbReference type="HOGENOM" id="CLU_040933_0_0_6"/>
<dbReference type="UniPathway" id="UPA00251">
    <property type="reaction ID" value="UER00321"/>
</dbReference>
<dbReference type="Proteomes" id="UP000008319">
    <property type="component" value="Chromosome"/>
</dbReference>
<dbReference type="GO" id="GO:0005829">
    <property type="term" value="C:cytosol"/>
    <property type="evidence" value="ECO:0007669"/>
    <property type="project" value="TreeGrafter"/>
</dbReference>
<dbReference type="GO" id="GO:0004853">
    <property type="term" value="F:uroporphyrinogen decarboxylase activity"/>
    <property type="evidence" value="ECO:0007669"/>
    <property type="project" value="UniProtKB-UniRule"/>
</dbReference>
<dbReference type="GO" id="GO:0019353">
    <property type="term" value="P:protoporphyrinogen IX biosynthetic process from glutamate"/>
    <property type="evidence" value="ECO:0007669"/>
    <property type="project" value="TreeGrafter"/>
</dbReference>
<dbReference type="CDD" id="cd00717">
    <property type="entry name" value="URO-D"/>
    <property type="match status" value="1"/>
</dbReference>
<dbReference type="FunFam" id="3.20.20.210:FF:000001">
    <property type="entry name" value="Uroporphyrinogen decarboxylase"/>
    <property type="match status" value="1"/>
</dbReference>
<dbReference type="Gene3D" id="3.20.20.210">
    <property type="match status" value="1"/>
</dbReference>
<dbReference type="HAMAP" id="MF_00218">
    <property type="entry name" value="URO_D"/>
    <property type="match status" value="1"/>
</dbReference>
<dbReference type="InterPro" id="IPR038071">
    <property type="entry name" value="UROD/MetE-like_sf"/>
</dbReference>
<dbReference type="InterPro" id="IPR006361">
    <property type="entry name" value="Uroporphyrinogen_deCO2ase_HemE"/>
</dbReference>
<dbReference type="InterPro" id="IPR000257">
    <property type="entry name" value="Uroporphyrinogen_deCOase"/>
</dbReference>
<dbReference type="NCBIfam" id="TIGR01464">
    <property type="entry name" value="hemE"/>
    <property type="match status" value="1"/>
</dbReference>
<dbReference type="PANTHER" id="PTHR21091">
    <property type="entry name" value="METHYLTETRAHYDROFOLATE:HOMOCYSTEINE METHYLTRANSFERASE RELATED"/>
    <property type="match status" value="1"/>
</dbReference>
<dbReference type="PANTHER" id="PTHR21091:SF169">
    <property type="entry name" value="UROPORPHYRINOGEN DECARBOXYLASE"/>
    <property type="match status" value="1"/>
</dbReference>
<dbReference type="Pfam" id="PF01208">
    <property type="entry name" value="URO-D"/>
    <property type="match status" value="1"/>
</dbReference>
<dbReference type="SUPFAM" id="SSF51726">
    <property type="entry name" value="UROD/MetE-like"/>
    <property type="match status" value="1"/>
</dbReference>
<dbReference type="PROSITE" id="PS00906">
    <property type="entry name" value="UROD_1"/>
    <property type="match status" value="1"/>
</dbReference>
<dbReference type="PROSITE" id="PS00907">
    <property type="entry name" value="UROD_2"/>
    <property type="match status" value="1"/>
</dbReference>
<keyword id="KW-0963">Cytoplasm</keyword>
<keyword id="KW-0210">Decarboxylase</keyword>
<keyword id="KW-0456">Lyase</keyword>
<keyword id="KW-0627">Porphyrin biosynthesis</keyword>
<keyword id="KW-1185">Reference proteome</keyword>